<protein>
    <recommendedName>
        <fullName>Cytochrome b-c1 complex subunit 8</fullName>
    </recommendedName>
    <alternativeName>
        <fullName>Complex III subunit 8</fullName>
    </alternativeName>
    <alternativeName>
        <fullName>Complex III subunit VIII</fullName>
    </alternativeName>
    <alternativeName>
        <fullName>Ubiquinol-cytochrome c reductase complex 9.5 kDa protein</fullName>
    </alternativeName>
    <alternativeName>
        <fullName>Ubiquinol-cytochrome c reductase complex ubiquinone-binding protein QP-C</fullName>
    </alternativeName>
</protein>
<name>QCR8_AILME</name>
<comment type="function">
    <text evidence="2">Component of the ubiquinol-cytochrome c oxidoreductase, a multisubunit transmembrane complex that is part of the mitochondrial electron transport chain which drives oxidative phosphorylation. The respiratory chain contains 3 multisubunit complexes succinate dehydrogenase (complex II, CII), ubiquinol-cytochrome c oxidoreductase (cytochrome b-c1 complex, complex III, CIII) and cytochrome c oxidase (complex IV, CIV), that cooperate to transfer electrons derived from NADH and succinate to molecular oxygen, creating an electrochemical gradient over the inner membrane that drives transmembrane transport and the ATP synthase. The cytochrome b-c1 complex catalyzes electron transfer from ubiquinol to cytochrome c, linking this redox reaction to translocation of protons across the mitochondrial inner membrane, with protons being carried across the membrane as hydrogens on the quinol. In the process called Q cycle, 2 protons are consumed from the matrix, 4 protons are released into the intermembrane space and 2 electrons are passed to cytochrome c.</text>
</comment>
<comment type="subunit">
    <text evidence="1 3 4">Component of the ubiquinol-cytochrome c oxidoreductase (cytochrome b-c1 complex, complex III, CIII), a multisubunit enzyme composed of 11 subunits. The complex is composed of 3 respiratory subunits cytochrome b, cytochrome c1 and Rieske protein UQCRFS1, 2 core protein subunits UQCRC1/QCR1 and UQCRC2/QCR2, and 6 low-molecular weight protein subunits UQCRH/QCR6, UQCRB/QCR7, UQCRQ/QCR8, UQCR10/QCR9, UQCR11/QCR10 and subunit 9, the cleavage product of Rieske protein UQCRFS1 (By similarity). The complex exists as an obligatory dimer and forms supercomplexes (SCs) in the inner mitochondrial membrane with NADH-ubiquinone oxidoreductase (complex I, CI) and cytochrome c oxidase (complex IV, CIV), resulting in different assemblies (supercomplex SCI(1)III(2)IV(1) and megacomplex MCI(2)III(2)IV(2)) (By similarity). Interacts with UQCC6 (By similarity).</text>
</comment>
<comment type="subcellular location">
    <subcellularLocation>
        <location evidence="2">Mitochondrion inner membrane</location>
        <topology evidence="2">Single-pass membrane protein</topology>
    </subcellularLocation>
</comment>
<comment type="similarity">
    <text evidence="5">Belongs to the UQCRQ/QCR8 family.</text>
</comment>
<accession>Q2L897</accession>
<keyword id="KW-0007">Acetylation</keyword>
<keyword id="KW-0249">Electron transport</keyword>
<keyword id="KW-0472">Membrane</keyword>
<keyword id="KW-0496">Mitochondrion</keyword>
<keyword id="KW-0999">Mitochondrion inner membrane</keyword>
<keyword id="KW-1185">Reference proteome</keyword>
<keyword id="KW-0679">Respiratory chain</keyword>
<keyword id="KW-0812">Transmembrane</keyword>
<keyword id="KW-1133">Transmembrane helix</keyword>
<keyword id="KW-0813">Transport</keyword>
<feature type="chain" id="PRO_0000253746" description="Cytochrome b-c1 complex subunit 8">
    <location>
        <begin position="1"/>
        <end position="82"/>
    </location>
</feature>
<feature type="topological domain" description="Mitochondrial matrix" evidence="3">
    <location>
        <begin position="1"/>
        <end position="39"/>
    </location>
</feature>
<feature type="transmembrane region" description="Helical" evidence="3">
    <location>
        <begin position="40"/>
        <end position="68"/>
    </location>
</feature>
<feature type="topological domain" description="Mitochondrial intermembrane" evidence="3">
    <location>
        <begin position="69"/>
        <end position="82"/>
    </location>
</feature>
<feature type="modified residue" description="N6-acetyllysine; alternate" evidence="4">
    <location>
        <position position="33"/>
    </location>
</feature>
<feature type="modified residue" description="N6-succinyllysine; alternate" evidence="4">
    <location>
        <position position="33"/>
    </location>
</feature>
<evidence type="ECO:0000250" key="1">
    <source>
        <dbReference type="UniProtKB" id="O14949"/>
    </source>
</evidence>
<evidence type="ECO:0000250" key="2">
    <source>
        <dbReference type="UniProtKB" id="P08525"/>
    </source>
</evidence>
<evidence type="ECO:0000250" key="3">
    <source>
        <dbReference type="UniProtKB" id="P13271"/>
    </source>
</evidence>
<evidence type="ECO:0000250" key="4">
    <source>
        <dbReference type="UniProtKB" id="Q9CQ69"/>
    </source>
</evidence>
<evidence type="ECO:0000305" key="5"/>
<sequence length="82" mass="9732">MGREFGNLTRMRHVITYSLSPFEQRAFPHYFSKGIPNVLRRMRACVLRVVPPFVAFYLVYTWGTQEFENSKRKNPAAYENDK</sequence>
<gene>
    <name type="primary">UQCRQ</name>
</gene>
<proteinExistence type="inferred from homology"/>
<reference key="1">
    <citation type="submission" date="2006-01" db="EMBL/GenBank/DDBJ databases">
        <title>cDNA cloning and sequence analysis of ubiquinol-cytochrome c reductase complex ubiquinone-binding protein (QP-C) from giant panda.</title>
        <authorList>
            <person name="Hou W."/>
            <person name="Peng Z."/>
            <person name="Chen Y."/>
            <person name="Wu X."/>
            <person name="Tang Z."/>
        </authorList>
    </citation>
    <scope>NUCLEOTIDE SEQUENCE [MRNA]</scope>
</reference>
<dbReference type="EMBL" id="DQ349120">
    <property type="protein sequence ID" value="ABC72132.1"/>
    <property type="molecule type" value="mRNA"/>
</dbReference>
<dbReference type="RefSeq" id="XP_002912950.1">
    <property type="nucleotide sequence ID" value="XM_002912904.4"/>
</dbReference>
<dbReference type="SMR" id="Q2L897"/>
<dbReference type="STRING" id="9646.ENSAMEP00000018758"/>
<dbReference type="Ensembl" id="ENSAMET00000019510.2">
    <property type="protein sequence ID" value="ENSAMEP00000018758.1"/>
    <property type="gene ID" value="ENSAMEG00000017762.2"/>
</dbReference>
<dbReference type="GeneID" id="100483229"/>
<dbReference type="KEGG" id="aml:100483229"/>
<dbReference type="CTD" id="27089"/>
<dbReference type="eggNOG" id="KOG4116">
    <property type="taxonomic scope" value="Eukaryota"/>
</dbReference>
<dbReference type="GeneTree" id="ENSGT00390000004029"/>
<dbReference type="HOGENOM" id="CLU_156007_2_0_1"/>
<dbReference type="InParanoid" id="Q2L897"/>
<dbReference type="OMA" id="MWRRFKG"/>
<dbReference type="OrthoDB" id="6683853at2759"/>
<dbReference type="TreeFam" id="TF300281"/>
<dbReference type="Proteomes" id="UP000008912">
    <property type="component" value="Unassembled WGS sequence"/>
</dbReference>
<dbReference type="GO" id="GO:0005743">
    <property type="term" value="C:mitochondrial inner membrane"/>
    <property type="evidence" value="ECO:0007669"/>
    <property type="project" value="UniProtKB-SubCell"/>
</dbReference>
<dbReference type="GO" id="GO:0045275">
    <property type="term" value="C:respiratory chain complex III"/>
    <property type="evidence" value="ECO:0007669"/>
    <property type="project" value="Ensembl"/>
</dbReference>
<dbReference type="GO" id="GO:0021680">
    <property type="term" value="P:cerebellar Purkinje cell layer development"/>
    <property type="evidence" value="ECO:0007669"/>
    <property type="project" value="Ensembl"/>
</dbReference>
<dbReference type="GO" id="GO:0021766">
    <property type="term" value="P:hippocampus development"/>
    <property type="evidence" value="ECO:0007669"/>
    <property type="project" value="Ensembl"/>
</dbReference>
<dbReference type="GO" id="GO:0021854">
    <property type="term" value="P:hypothalamus development"/>
    <property type="evidence" value="ECO:0007669"/>
    <property type="project" value="Ensembl"/>
</dbReference>
<dbReference type="GO" id="GO:0030901">
    <property type="term" value="P:midbrain development"/>
    <property type="evidence" value="ECO:0007669"/>
    <property type="project" value="Ensembl"/>
</dbReference>
<dbReference type="GO" id="GO:0006122">
    <property type="term" value="P:mitochondrial electron transport, ubiquinol to cytochrome c"/>
    <property type="evidence" value="ECO:0007669"/>
    <property type="project" value="InterPro"/>
</dbReference>
<dbReference type="GO" id="GO:0021548">
    <property type="term" value="P:pons development"/>
    <property type="evidence" value="ECO:0007669"/>
    <property type="project" value="Ensembl"/>
</dbReference>
<dbReference type="GO" id="GO:0021860">
    <property type="term" value="P:pyramidal neuron development"/>
    <property type="evidence" value="ECO:0007669"/>
    <property type="project" value="Ensembl"/>
</dbReference>
<dbReference type="GO" id="GO:0021539">
    <property type="term" value="P:subthalamus development"/>
    <property type="evidence" value="ECO:0007669"/>
    <property type="project" value="Ensembl"/>
</dbReference>
<dbReference type="GO" id="GO:0021794">
    <property type="term" value="P:thalamus development"/>
    <property type="evidence" value="ECO:0007669"/>
    <property type="project" value="Ensembl"/>
</dbReference>
<dbReference type="FunFam" id="1.20.5.210:FF:000001">
    <property type="entry name" value="Cytochrome b-c1 complex subunit 8"/>
    <property type="match status" value="1"/>
</dbReference>
<dbReference type="Gene3D" id="1.20.5.210">
    <property type="entry name" value="Cytochrome b-c1 complex subunit 8"/>
    <property type="match status" value="1"/>
</dbReference>
<dbReference type="InterPro" id="IPR004205">
    <property type="entry name" value="Cyt_bc1_su8"/>
</dbReference>
<dbReference type="InterPro" id="IPR036642">
    <property type="entry name" value="Cyt_bc1_su8_sf"/>
</dbReference>
<dbReference type="PANTHER" id="PTHR12119:SF2">
    <property type="entry name" value="CYTOCHROME B-C1 COMPLEX SUBUNIT 8"/>
    <property type="match status" value="1"/>
</dbReference>
<dbReference type="PANTHER" id="PTHR12119">
    <property type="entry name" value="UBIQUINOL-CYTOCHROME C REDUCTASE COMPLEX UBIQUINONE-BINDING PROTEIN QP-C"/>
    <property type="match status" value="1"/>
</dbReference>
<dbReference type="Pfam" id="PF02939">
    <property type="entry name" value="UcrQ"/>
    <property type="match status" value="1"/>
</dbReference>
<dbReference type="SUPFAM" id="SSF81508">
    <property type="entry name" value="Ubiquinone-binding protein QP-C of cytochrome bc1 complex (Ubiquinol-cytochrome c reductase)"/>
    <property type="match status" value="1"/>
</dbReference>
<organism>
    <name type="scientific">Ailuropoda melanoleuca</name>
    <name type="common">Giant panda</name>
    <dbReference type="NCBI Taxonomy" id="9646"/>
    <lineage>
        <taxon>Eukaryota</taxon>
        <taxon>Metazoa</taxon>
        <taxon>Chordata</taxon>
        <taxon>Craniata</taxon>
        <taxon>Vertebrata</taxon>
        <taxon>Euteleostomi</taxon>
        <taxon>Mammalia</taxon>
        <taxon>Eutheria</taxon>
        <taxon>Laurasiatheria</taxon>
        <taxon>Carnivora</taxon>
        <taxon>Caniformia</taxon>
        <taxon>Ursidae</taxon>
        <taxon>Ailuropoda</taxon>
    </lineage>
</organism>